<accession>P67905</accession>
<accession>O68928</accession>
<accession>P44378</accession>
<accession>Q9CL31</accession>
<name>RS10_SALTI</name>
<sequence>MQNQRIRIRLKAFDHRLIDQSTAEIVETAKRTGAQVRGPIPLPTRKERFTVLISPHVNKDARDQYEIRTHKRLVDIVEPTEKTVDALMRLDLAAGVDVQISLG</sequence>
<dbReference type="EMBL" id="AL513382">
    <property type="protein sequence ID" value="CAD08172.1"/>
    <property type="molecule type" value="Genomic_DNA"/>
</dbReference>
<dbReference type="EMBL" id="AE014613">
    <property type="protein sequence ID" value="AAO71531.1"/>
    <property type="molecule type" value="Genomic_DNA"/>
</dbReference>
<dbReference type="RefSeq" id="NP_458459.1">
    <property type="nucleotide sequence ID" value="NC_003198.1"/>
</dbReference>
<dbReference type="RefSeq" id="WP_001181005.1">
    <property type="nucleotide sequence ID" value="NZ_WSUR01000046.1"/>
</dbReference>
<dbReference type="SMR" id="P67905"/>
<dbReference type="STRING" id="220341.gene:17588185"/>
<dbReference type="GeneID" id="98390443"/>
<dbReference type="KEGG" id="stt:t4064"/>
<dbReference type="KEGG" id="sty:STY4357"/>
<dbReference type="PATRIC" id="fig|220341.7.peg.4453"/>
<dbReference type="eggNOG" id="COG0051">
    <property type="taxonomic scope" value="Bacteria"/>
</dbReference>
<dbReference type="HOGENOM" id="CLU_122625_1_3_6"/>
<dbReference type="OMA" id="VDIEIKM"/>
<dbReference type="OrthoDB" id="9804464at2"/>
<dbReference type="Proteomes" id="UP000000541">
    <property type="component" value="Chromosome"/>
</dbReference>
<dbReference type="Proteomes" id="UP000002670">
    <property type="component" value="Chromosome"/>
</dbReference>
<dbReference type="GO" id="GO:1990904">
    <property type="term" value="C:ribonucleoprotein complex"/>
    <property type="evidence" value="ECO:0007669"/>
    <property type="project" value="UniProtKB-KW"/>
</dbReference>
<dbReference type="GO" id="GO:0005840">
    <property type="term" value="C:ribosome"/>
    <property type="evidence" value="ECO:0007669"/>
    <property type="project" value="UniProtKB-KW"/>
</dbReference>
<dbReference type="GO" id="GO:0003735">
    <property type="term" value="F:structural constituent of ribosome"/>
    <property type="evidence" value="ECO:0007669"/>
    <property type="project" value="InterPro"/>
</dbReference>
<dbReference type="GO" id="GO:0000049">
    <property type="term" value="F:tRNA binding"/>
    <property type="evidence" value="ECO:0007669"/>
    <property type="project" value="UniProtKB-UniRule"/>
</dbReference>
<dbReference type="GO" id="GO:0006412">
    <property type="term" value="P:translation"/>
    <property type="evidence" value="ECO:0007669"/>
    <property type="project" value="UniProtKB-UniRule"/>
</dbReference>
<dbReference type="FunFam" id="3.30.70.600:FF:000001">
    <property type="entry name" value="30S ribosomal protein S10"/>
    <property type="match status" value="1"/>
</dbReference>
<dbReference type="Gene3D" id="3.30.70.600">
    <property type="entry name" value="Ribosomal protein S10 domain"/>
    <property type="match status" value="1"/>
</dbReference>
<dbReference type="HAMAP" id="MF_00508">
    <property type="entry name" value="Ribosomal_uS10"/>
    <property type="match status" value="1"/>
</dbReference>
<dbReference type="InterPro" id="IPR001848">
    <property type="entry name" value="Ribosomal_uS10"/>
</dbReference>
<dbReference type="InterPro" id="IPR018268">
    <property type="entry name" value="Ribosomal_uS10_CS"/>
</dbReference>
<dbReference type="InterPro" id="IPR027486">
    <property type="entry name" value="Ribosomal_uS10_dom"/>
</dbReference>
<dbReference type="InterPro" id="IPR036838">
    <property type="entry name" value="Ribosomal_uS10_dom_sf"/>
</dbReference>
<dbReference type="NCBIfam" id="NF001861">
    <property type="entry name" value="PRK00596.1"/>
    <property type="match status" value="1"/>
</dbReference>
<dbReference type="NCBIfam" id="TIGR01049">
    <property type="entry name" value="rpsJ_bact"/>
    <property type="match status" value="1"/>
</dbReference>
<dbReference type="PANTHER" id="PTHR11700">
    <property type="entry name" value="30S RIBOSOMAL PROTEIN S10 FAMILY MEMBER"/>
    <property type="match status" value="1"/>
</dbReference>
<dbReference type="Pfam" id="PF00338">
    <property type="entry name" value="Ribosomal_S10"/>
    <property type="match status" value="1"/>
</dbReference>
<dbReference type="PRINTS" id="PR00971">
    <property type="entry name" value="RIBOSOMALS10"/>
</dbReference>
<dbReference type="SMART" id="SM01403">
    <property type="entry name" value="Ribosomal_S10"/>
    <property type="match status" value="1"/>
</dbReference>
<dbReference type="SUPFAM" id="SSF54999">
    <property type="entry name" value="Ribosomal protein S10"/>
    <property type="match status" value="1"/>
</dbReference>
<dbReference type="PROSITE" id="PS00361">
    <property type="entry name" value="RIBOSOMAL_S10"/>
    <property type="match status" value="1"/>
</dbReference>
<organism>
    <name type="scientific">Salmonella typhi</name>
    <dbReference type="NCBI Taxonomy" id="90370"/>
    <lineage>
        <taxon>Bacteria</taxon>
        <taxon>Pseudomonadati</taxon>
        <taxon>Pseudomonadota</taxon>
        <taxon>Gammaproteobacteria</taxon>
        <taxon>Enterobacterales</taxon>
        <taxon>Enterobacteriaceae</taxon>
        <taxon>Salmonella</taxon>
    </lineage>
</organism>
<proteinExistence type="inferred from homology"/>
<comment type="function">
    <text evidence="1">Involved in the binding of tRNA to the ribosomes.</text>
</comment>
<comment type="subunit">
    <text evidence="1">Part of the 30S ribosomal subunit.</text>
</comment>
<comment type="similarity">
    <text evidence="1">Belongs to the universal ribosomal protein uS10 family.</text>
</comment>
<gene>
    <name evidence="1" type="primary">rpsJ</name>
    <name type="ordered locus">STY4357</name>
    <name type="ordered locus">t4064</name>
</gene>
<keyword id="KW-0687">Ribonucleoprotein</keyword>
<keyword id="KW-0689">Ribosomal protein</keyword>
<protein>
    <recommendedName>
        <fullName evidence="1">Small ribosomal subunit protein uS10</fullName>
    </recommendedName>
    <alternativeName>
        <fullName evidence="2">30S ribosomal protein S10</fullName>
    </alternativeName>
</protein>
<reference key="1">
    <citation type="journal article" date="2001" name="Nature">
        <title>Complete genome sequence of a multiple drug resistant Salmonella enterica serovar Typhi CT18.</title>
        <authorList>
            <person name="Parkhill J."/>
            <person name="Dougan G."/>
            <person name="James K.D."/>
            <person name="Thomson N.R."/>
            <person name="Pickard D."/>
            <person name="Wain J."/>
            <person name="Churcher C.M."/>
            <person name="Mungall K.L."/>
            <person name="Bentley S.D."/>
            <person name="Holden M.T.G."/>
            <person name="Sebaihia M."/>
            <person name="Baker S."/>
            <person name="Basham D."/>
            <person name="Brooks K."/>
            <person name="Chillingworth T."/>
            <person name="Connerton P."/>
            <person name="Cronin A."/>
            <person name="Davis P."/>
            <person name="Davies R.M."/>
            <person name="Dowd L."/>
            <person name="White N."/>
            <person name="Farrar J."/>
            <person name="Feltwell T."/>
            <person name="Hamlin N."/>
            <person name="Haque A."/>
            <person name="Hien T.T."/>
            <person name="Holroyd S."/>
            <person name="Jagels K."/>
            <person name="Krogh A."/>
            <person name="Larsen T.S."/>
            <person name="Leather S."/>
            <person name="Moule S."/>
            <person name="O'Gaora P."/>
            <person name="Parry C."/>
            <person name="Quail M.A."/>
            <person name="Rutherford K.M."/>
            <person name="Simmonds M."/>
            <person name="Skelton J."/>
            <person name="Stevens K."/>
            <person name="Whitehead S."/>
            <person name="Barrell B.G."/>
        </authorList>
    </citation>
    <scope>NUCLEOTIDE SEQUENCE [LARGE SCALE GENOMIC DNA]</scope>
    <source>
        <strain>CT18</strain>
    </source>
</reference>
<reference key="2">
    <citation type="journal article" date="2003" name="J. Bacteriol.">
        <title>Comparative genomics of Salmonella enterica serovar Typhi strains Ty2 and CT18.</title>
        <authorList>
            <person name="Deng W."/>
            <person name="Liou S.-R."/>
            <person name="Plunkett G. III"/>
            <person name="Mayhew G.F."/>
            <person name="Rose D.J."/>
            <person name="Burland V."/>
            <person name="Kodoyianni V."/>
            <person name="Schwartz D.C."/>
            <person name="Blattner F.R."/>
        </authorList>
    </citation>
    <scope>NUCLEOTIDE SEQUENCE [LARGE SCALE GENOMIC DNA]</scope>
    <source>
        <strain>ATCC 700931 / Ty2</strain>
    </source>
</reference>
<feature type="chain" id="PRO_0000146588" description="Small ribosomal subunit protein uS10">
    <location>
        <begin position="1"/>
        <end position="103"/>
    </location>
</feature>
<evidence type="ECO:0000255" key="1">
    <source>
        <dbReference type="HAMAP-Rule" id="MF_00508"/>
    </source>
</evidence>
<evidence type="ECO:0000305" key="2"/>